<comment type="function">
    <text evidence="1">Catalyzes the reversible reaction in which hydroxymethyl group from 5,10-methylenetetrahydrofolate is transferred onto alpha-ketoisovalerate to form ketopantoate.</text>
</comment>
<comment type="catalytic activity">
    <reaction evidence="1">
        <text>3-methyl-2-oxobutanoate + (6R)-5,10-methylene-5,6,7,8-tetrahydrofolate + H2O = 2-dehydropantoate + (6S)-5,6,7,8-tetrahydrofolate</text>
        <dbReference type="Rhea" id="RHEA:11824"/>
        <dbReference type="ChEBI" id="CHEBI:11561"/>
        <dbReference type="ChEBI" id="CHEBI:11851"/>
        <dbReference type="ChEBI" id="CHEBI:15377"/>
        <dbReference type="ChEBI" id="CHEBI:15636"/>
        <dbReference type="ChEBI" id="CHEBI:57453"/>
        <dbReference type="EC" id="2.1.2.11"/>
    </reaction>
</comment>
<comment type="cofactor">
    <cofactor evidence="1">
        <name>Mg(2+)</name>
        <dbReference type="ChEBI" id="CHEBI:18420"/>
    </cofactor>
    <text evidence="1">Binds 1 Mg(2+) ion per subunit.</text>
</comment>
<comment type="pathway">
    <text evidence="1">Cofactor biosynthesis; (R)-pantothenate biosynthesis; (R)-pantoate from 3-methyl-2-oxobutanoate: step 1/2.</text>
</comment>
<comment type="subunit">
    <text evidence="1">Homodecamer; pentamer of dimers.</text>
</comment>
<comment type="subcellular location">
    <subcellularLocation>
        <location evidence="1">Cytoplasm</location>
    </subcellularLocation>
</comment>
<comment type="similarity">
    <text evidence="1">Belongs to the PanB family.</text>
</comment>
<name>PANB_AGRFC</name>
<keyword id="KW-0963">Cytoplasm</keyword>
<keyword id="KW-0460">Magnesium</keyword>
<keyword id="KW-0479">Metal-binding</keyword>
<keyword id="KW-0566">Pantothenate biosynthesis</keyword>
<keyword id="KW-1185">Reference proteome</keyword>
<keyword id="KW-0808">Transferase</keyword>
<reference key="1">
    <citation type="journal article" date="2001" name="Science">
        <title>The genome of the natural genetic engineer Agrobacterium tumefaciens C58.</title>
        <authorList>
            <person name="Wood D.W."/>
            <person name="Setubal J.C."/>
            <person name="Kaul R."/>
            <person name="Monks D.E."/>
            <person name="Kitajima J.P."/>
            <person name="Okura V.K."/>
            <person name="Zhou Y."/>
            <person name="Chen L."/>
            <person name="Wood G.E."/>
            <person name="Almeida N.F. Jr."/>
            <person name="Woo L."/>
            <person name="Chen Y."/>
            <person name="Paulsen I.T."/>
            <person name="Eisen J.A."/>
            <person name="Karp P.D."/>
            <person name="Bovee D. Sr."/>
            <person name="Chapman P."/>
            <person name="Clendenning J."/>
            <person name="Deatherage G."/>
            <person name="Gillet W."/>
            <person name="Grant C."/>
            <person name="Kutyavin T."/>
            <person name="Levy R."/>
            <person name="Li M.-J."/>
            <person name="McClelland E."/>
            <person name="Palmieri A."/>
            <person name="Raymond C."/>
            <person name="Rouse G."/>
            <person name="Saenphimmachak C."/>
            <person name="Wu Z."/>
            <person name="Romero P."/>
            <person name="Gordon D."/>
            <person name="Zhang S."/>
            <person name="Yoo H."/>
            <person name="Tao Y."/>
            <person name="Biddle P."/>
            <person name="Jung M."/>
            <person name="Krespan W."/>
            <person name="Perry M."/>
            <person name="Gordon-Kamm B."/>
            <person name="Liao L."/>
            <person name="Kim S."/>
            <person name="Hendrick C."/>
            <person name="Zhao Z.-Y."/>
            <person name="Dolan M."/>
            <person name="Chumley F."/>
            <person name="Tingey S.V."/>
            <person name="Tomb J.-F."/>
            <person name="Gordon M.P."/>
            <person name="Olson M.V."/>
            <person name="Nester E.W."/>
        </authorList>
    </citation>
    <scope>NUCLEOTIDE SEQUENCE [LARGE SCALE GENOMIC DNA]</scope>
    <source>
        <strain>C58 / ATCC 33970</strain>
    </source>
</reference>
<reference key="2">
    <citation type="journal article" date="2001" name="Science">
        <title>Genome sequence of the plant pathogen and biotechnology agent Agrobacterium tumefaciens C58.</title>
        <authorList>
            <person name="Goodner B."/>
            <person name="Hinkle G."/>
            <person name="Gattung S."/>
            <person name="Miller N."/>
            <person name="Blanchard M."/>
            <person name="Qurollo B."/>
            <person name="Goldman B.S."/>
            <person name="Cao Y."/>
            <person name="Askenazi M."/>
            <person name="Halling C."/>
            <person name="Mullin L."/>
            <person name="Houmiel K."/>
            <person name="Gordon J."/>
            <person name="Vaudin M."/>
            <person name="Iartchouk O."/>
            <person name="Epp A."/>
            <person name="Liu F."/>
            <person name="Wollam C."/>
            <person name="Allinger M."/>
            <person name="Doughty D."/>
            <person name="Scott C."/>
            <person name="Lappas C."/>
            <person name="Markelz B."/>
            <person name="Flanagan C."/>
            <person name="Crowell C."/>
            <person name="Gurson J."/>
            <person name="Lomo C."/>
            <person name="Sear C."/>
            <person name="Strub G."/>
            <person name="Cielo C."/>
            <person name="Slater S."/>
        </authorList>
    </citation>
    <scope>NUCLEOTIDE SEQUENCE [LARGE SCALE GENOMIC DNA]</scope>
    <source>
        <strain>C58 / ATCC 33970</strain>
    </source>
</reference>
<organism>
    <name type="scientific">Agrobacterium fabrum (strain C58 / ATCC 33970)</name>
    <name type="common">Agrobacterium tumefaciens (strain C58)</name>
    <dbReference type="NCBI Taxonomy" id="176299"/>
    <lineage>
        <taxon>Bacteria</taxon>
        <taxon>Pseudomonadati</taxon>
        <taxon>Pseudomonadota</taxon>
        <taxon>Alphaproteobacteria</taxon>
        <taxon>Hyphomicrobiales</taxon>
        <taxon>Rhizobiaceae</taxon>
        <taxon>Rhizobium/Agrobacterium group</taxon>
        <taxon>Agrobacterium</taxon>
        <taxon>Agrobacterium tumefaciens complex</taxon>
    </lineage>
</organism>
<protein>
    <recommendedName>
        <fullName evidence="1">3-methyl-2-oxobutanoate hydroxymethyltransferase</fullName>
        <ecNumber evidence="1">2.1.2.11</ecNumber>
    </recommendedName>
    <alternativeName>
        <fullName evidence="1">Ketopantoate hydroxymethyltransferase</fullName>
        <shortName evidence="1">KPHMT</shortName>
    </alternativeName>
</protein>
<feature type="chain" id="PRO_0000184805" description="3-methyl-2-oxobutanoate hydroxymethyltransferase">
    <location>
        <begin position="1"/>
        <end position="279"/>
    </location>
</feature>
<feature type="active site" description="Proton acceptor" evidence="1">
    <location>
        <position position="187"/>
    </location>
</feature>
<feature type="binding site" evidence="1">
    <location>
        <begin position="49"/>
        <end position="50"/>
    </location>
    <ligand>
        <name>3-methyl-2-oxobutanoate</name>
        <dbReference type="ChEBI" id="CHEBI:11851"/>
    </ligand>
</feature>
<feature type="binding site" evidence="1">
    <location>
        <position position="49"/>
    </location>
    <ligand>
        <name>Mg(2+)</name>
        <dbReference type="ChEBI" id="CHEBI:18420"/>
    </ligand>
</feature>
<feature type="binding site" evidence="1">
    <location>
        <position position="88"/>
    </location>
    <ligand>
        <name>3-methyl-2-oxobutanoate</name>
        <dbReference type="ChEBI" id="CHEBI:11851"/>
    </ligand>
</feature>
<feature type="binding site" evidence="1">
    <location>
        <position position="88"/>
    </location>
    <ligand>
        <name>Mg(2+)</name>
        <dbReference type="ChEBI" id="CHEBI:18420"/>
    </ligand>
</feature>
<feature type="binding site" evidence="1">
    <location>
        <position position="118"/>
    </location>
    <ligand>
        <name>3-methyl-2-oxobutanoate</name>
        <dbReference type="ChEBI" id="CHEBI:11851"/>
    </ligand>
</feature>
<feature type="binding site" evidence="1">
    <location>
        <position position="120"/>
    </location>
    <ligand>
        <name>Mg(2+)</name>
        <dbReference type="ChEBI" id="CHEBI:18420"/>
    </ligand>
</feature>
<evidence type="ECO:0000255" key="1">
    <source>
        <dbReference type="HAMAP-Rule" id="MF_00156"/>
    </source>
</evidence>
<dbReference type="EC" id="2.1.2.11" evidence="1"/>
<dbReference type="EMBL" id="AE007870">
    <property type="protein sequence ID" value="AAK89911.1"/>
    <property type="molecule type" value="Genomic_DNA"/>
</dbReference>
<dbReference type="PIR" id="AB2985">
    <property type="entry name" value="AB2985"/>
</dbReference>
<dbReference type="PIR" id="E98298">
    <property type="entry name" value="E98298"/>
</dbReference>
<dbReference type="RefSeq" id="NP_357126.1">
    <property type="nucleotide sequence ID" value="NC_003063.2"/>
</dbReference>
<dbReference type="RefSeq" id="WP_010973079.1">
    <property type="nucleotide sequence ID" value="NC_003063.2"/>
</dbReference>
<dbReference type="SMR" id="Q8UA91"/>
<dbReference type="STRING" id="176299.Atu3483"/>
<dbReference type="EnsemblBacteria" id="AAK89911">
    <property type="protein sequence ID" value="AAK89911"/>
    <property type="gene ID" value="Atu3483"/>
</dbReference>
<dbReference type="GeneID" id="1135357"/>
<dbReference type="KEGG" id="atu:Atu3483"/>
<dbReference type="PATRIC" id="fig|176299.10.peg.3322"/>
<dbReference type="eggNOG" id="COG0413">
    <property type="taxonomic scope" value="Bacteria"/>
</dbReference>
<dbReference type="HOGENOM" id="CLU_036645_1_0_5"/>
<dbReference type="OrthoDB" id="9781789at2"/>
<dbReference type="PhylomeDB" id="Q8UA91"/>
<dbReference type="BioCyc" id="AGRO:ATU3483-MONOMER"/>
<dbReference type="UniPathway" id="UPA00028">
    <property type="reaction ID" value="UER00003"/>
</dbReference>
<dbReference type="Proteomes" id="UP000000813">
    <property type="component" value="Chromosome linear"/>
</dbReference>
<dbReference type="GO" id="GO:0005737">
    <property type="term" value="C:cytoplasm"/>
    <property type="evidence" value="ECO:0007669"/>
    <property type="project" value="UniProtKB-SubCell"/>
</dbReference>
<dbReference type="GO" id="GO:0003864">
    <property type="term" value="F:3-methyl-2-oxobutanoate hydroxymethyltransferase activity"/>
    <property type="evidence" value="ECO:0007669"/>
    <property type="project" value="UniProtKB-UniRule"/>
</dbReference>
<dbReference type="GO" id="GO:0000287">
    <property type="term" value="F:magnesium ion binding"/>
    <property type="evidence" value="ECO:0007669"/>
    <property type="project" value="TreeGrafter"/>
</dbReference>
<dbReference type="GO" id="GO:0015940">
    <property type="term" value="P:pantothenate biosynthetic process"/>
    <property type="evidence" value="ECO:0007669"/>
    <property type="project" value="UniProtKB-UniRule"/>
</dbReference>
<dbReference type="CDD" id="cd06557">
    <property type="entry name" value="KPHMT-like"/>
    <property type="match status" value="1"/>
</dbReference>
<dbReference type="FunFam" id="3.20.20.60:FF:000003">
    <property type="entry name" value="3-methyl-2-oxobutanoate hydroxymethyltransferase"/>
    <property type="match status" value="1"/>
</dbReference>
<dbReference type="Gene3D" id="3.20.20.60">
    <property type="entry name" value="Phosphoenolpyruvate-binding domains"/>
    <property type="match status" value="1"/>
</dbReference>
<dbReference type="HAMAP" id="MF_00156">
    <property type="entry name" value="PanB"/>
    <property type="match status" value="1"/>
</dbReference>
<dbReference type="InterPro" id="IPR003700">
    <property type="entry name" value="Pantoate_hydroxy_MeTrfase"/>
</dbReference>
<dbReference type="InterPro" id="IPR015813">
    <property type="entry name" value="Pyrv/PenolPyrv_kinase-like_dom"/>
</dbReference>
<dbReference type="InterPro" id="IPR040442">
    <property type="entry name" value="Pyrv_kinase-like_dom_sf"/>
</dbReference>
<dbReference type="NCBIfam" id="TIGR00222">
    <property type="entry name" value="panB"/>
    <property type="match status" value="1"/>
</dbReference>
<dbReference type="NCBIfam" id="NF001452">
    <property type="entry name" value="PRK00311.1"/>
    <property type="match status" value="1"/>
</dbReference>
<dbReference type="PANTHER" id="PTHR20881">
    <property type="entry name" value="3-METHYL-2-OXOBUTANOATE HYDROXYMETHYLTRANSFERASE"/>
    <property type="match status" value="1"/>
</dbReference>
<dbReference type="PANTHER" id="PTHR20881:SF0">
    <property type="entry name" value="3-METHYL-2-OXOBUTANOATE HYDROXYMETHYLTRANSFERASE"/>
    <property type="match status" value="1"/>
</dbReference>
<dbReference type="Pfam" id="PF02548">
    <property type="entry name" value="Pantoate_transf"/>
    <property type="match status" value="1"/>
</dbReference>
<dbReference type="PIRSF" id="PIRSF000388">
    <property type="entry name" value="Pantoate_hydroxy_MeTrfase"/>
    <property type="match status" value="1"/>
</dbReference>
<dbReference type="SUPFAM" id="SSF51621">
    <property type="entry name" value="Phosphoenolpyruvate/pyruvate domain"/>
    <property type="match status" value="1"/>
</dbReference>
<proteinExistence type="inferred from homology"/>
<accession>Q8UA91</accession>
<sequence length="279" mass="29759">MSAHAKQKRLTTASIRQMKGEARIVCLTAYTTPIARLLDPHCDLLLVGDSLGMVLYGMETTVGVTLDMMIAHGRAVMRGVEHACVIVDLPFGTYQESKEQAFRNAVRLMQETGCDGVKLEGGEEMAETIAFLVARGIPVFGHVGLMPQLVHTAGGFRSLGHSDAETQKIWRDGIAVDQAGAFAIVVEGTVEPLARELTEKLAAPTVGIGASPACDGQVLVSDDMLGLFSDFKPKFVKRYADLGTAATQAAAAYADEVRSGAFPGPEHTFQVRKPSPSGK</sequence>
<gene>
    <name evidence="1" type="primary">panB</name>
    <name type="ordered locus">Atu3483</name>
    <name type="ORF">AGR_L_2695</name>
</gene>